<evidence type="ECO:0000255" key="1">
    <source>
        <dbReference type="HAMAP-Rule" id="MF_01874"/>
    </source>
</evidence>
<reference key="1">
    <citation type="journal article" date="2004" name="Proc. Natl. Acad. Sci. U.S.A.">
        <title>Genome sequence of the enterobacterial phytopathogen Erwinia carotovora subsp. atroseptica and characterization of virulence factors.</title>
        <authorList>
            <person name="Bell K.S."/>
            <person name="Sebaihia M."/>
            <person name="Pritchard L."/>
            <person name="Holden M.T.G."/>
            <person name="Hyman L.J."/>
            <person name="Holeva M.C."/>
            <person name="Thomson N.R."/>
            <person name="Bentley S.D."/>
            <person name="Churcher L.J.C."/>
            <person name="Mungall K."/>
            <person name="Atkin R."/>
            <person name="Bason N."/>
            <person name="Brooks K."/>
            <person name="Chillingworth T."/>
            <person name="Clark K."/>
            <person name="Doggett J."/>
            <person name="Fraser A."/>
            <person name="Hance Z."/>
            <person name="Hauser H."/>
            <person name="Jagels K."/>
            <person name="Moule S."/>
            <person name="Norbertczak H."/>
            <person name="Ormond D."/>
            <person name="Price C."/>
            <person name="Quail M.A."/>
            <person name="Sanders M."/>
            <person name="Walker D."/>
            <person name="Whitehead S."/>
            <person name="Salmond G.P.C."/>
            <person name="Birch P.R.J."/>
            <person name="Parkhill J."/>
            <person name="Toth I.K."/>
        </authorList>
    </citation>
    <scope>NUCLEOTIDE SEQUENCE [LARGE SCALE GENOMIC DNA]</scope>
    <source>
        <strain>SCRI 1043 / ATCC BAA-672</strain>
    </source>
</reference>
<sequence length="150" mass="15609">MAYIDPTLLILLVLAGLGIISHNMTVTLAILVLLAIRITPLNSYFPWVEKYGLSIGIVVLTIGVMAPIASGKITASEVMHSFLHWKSLLAILIGVAVSWLGGRGVSLMSNQPSVVAGLLVGTVMGVALFRGVPVGPLIAAGLLSLLIGKT</sequence>
<keyword id="KW-1003">Cell membrane</keyword>
<keyword id="KW-0472">Membrane</keyword>
<keyword id="KW-1185">Reference proteome</keyword>
<keyword id="KW-0812">Transmembrane</keyword>
<keyword id="KW-1133">Transmembrane helix</keyword>
<organism>
    <name type="scientific">Pectobacterium atrosepticum (strain SCRI 1043 / ATCC BAA-672)</name>
    <name type="common">Erwinia carotovora subsp. atroseptica</name>
    <dbReference type="NCBI Taxonomy" id="218491"/>
    <lineage>
        <taxon>Bacteria</taxon>
        <taxon>Pseudomonadati</taxon>
        <taxon>Pseudomonadota</taxon>
        <taxon>Gammaproteobacteria</taxon>
        <taxon>Enterobacterales</taxon>
        <taxon>Pectobacteriaceae</taxon>
        <taxon>Pectobacterium</taxon>
    </lineage>
</organism>
<name>Y1265_PECAS</name>
<protein>
    <recommendedName>
        <fullName evidence="1">UPF0756 membrane protein ECA1265</fullName>
    </recommendedName>
</protein>
<dbReference type="EMBL" id="BX950851">
    <property type="protein sequence ID" value="CAG74175.1"/>
    <property type="molecule type" value="Genomic_DNA"/>
</dbReference>
<dbReference type="RefSeq" id="WP_011092854.1">
    <property type="nucleotide sequence ID" value="NC_004547.2"/>
</dbReference>
<dbReference type="STRING" id="218491.ECA1265"/>
<dbReference type="KEGG" id="eca:ECA1265"/>
<dbReference type="PATRIC" id="fig|218491.5.peg.1288"/>
<dbReference type="eggNOG" id="COG2707">
    <property type="taxonomic scope" value="Bacteria"/>
</dbReference>
<dbReference type="HOGENOM" id="CLU_125889_0_0_6"/>
<dbReference type="OrthoDB" id="80306at2"/>
<dbReference type="Proteomes" id="UP000007966">
    <property type="component" value="Chromosome"/>
</dbReference>
<dbReference type="GO" id="GO:0005886">
    <property type="term" value="C:plasma membrane"/>
    <property type="evidence" value="ECO:0007669"/>
    <property type="project" value="UniProtKB-SubCell"/>
</dbReference>
<dbReference type="HAMAP" id="MF_01874">
    <property type="entry name" value="UPF0756"/>
    <property type="match status" value="1"/>
</dbReference>
<dbReference type="InterPro" id="IPR007382">
    <property type="entry name" value="UPF0756_TM"/>
</dbReference>
<dbReference type="PANTHER" id="PTHR38452">
    <property type="entry name" value="UPF0756 MEMBRANE PROTEIN YEAL"/>
    <property type="match status" value="1"/>
</dbReference>
<dbReference type="PANTHER" id="PTHR38452:SF1">
    <property type="entry name" value="UPF0756 MEMBRANE PROTEIN YEAL"/>
    <property type="match status" value="1"/>
</dbReference>
<dbReference type="Pfam" id="PF04284">
    <property type="entry name" value="DUF441"/>
    <property type="match status" value="1"/>
</dbReference>
<proteinExistence type="inferred from homology"/>
<accession>Q6D7R0</accession>
<gene>
    <name type="ordered locus">ECA1265</name>
</gene>
<feature type="chain" id="PRO_0000388851" description="UPF0756 membrane protein ECA1265">
    <location>
        <begin position="1"/>
        <end position="150"/>
    </location>
</feature>
<feature type="transmembrane region" description="Helical" evidence="1">
    <location>
        <begin position="1"/>
        <end position="21"/>
    </location>
</feature>
<feature type="transmembrane region" description="Helical" evidence="1">
    <location>
        <begin position="51"/>
        <end position="71"/>
    </location>
</feature>
<feature type="transmembrane region" description="Helical" evidence="1">
    <location>
        <begin position="82"/>
        <end position="102"/>
    </location>
</feature>
<feature type="transmembrane region" description="Helical" evidence="1">
    <location>
        <begin position="127"/>
        <end position="147"/>
    </location>
</feature>
<comment type="subcellular location">
    <subcellularLocation>
        <location evidence="1">Cell membrane</location>
        <topology evidence="1">Multi-pass membrane protein</topology>
    </subcellularLocation>
</comment>
<comment type="similarity">
    <text evidence="1">Belongs to the UPF0756 family.</text>
</comment>